<protein>
    <recommendedName>
        <fullName evidence="1">Major facilitator superfamily domain-containing protein 4B</fullName>
    </recommendedName>
</protein>
<sequence length="536" mass="58619">MLIEERLLTLFKRNCQHTLTYWSVFFSFGLSIAFLGPTILDLKCRTGSTLQEITWVFFAQQLCLLIGSSSGGAFTKTLFSALLALFLSSLIISVVFSIIPLCYNVLLLAIAMAVSGLAMGIIDTIANIQLVSIYKKDSPIFLQALHFFIGLGALLSPLIAEPFISGHCLRSNSTENATEIIHHFRSSFRSPVNLPESSPLSGPVEERNVSYAFWIMALINLPVPIAVFVLMYQEKLLPFCPNSSPRLLDKDELAMETKAPDNTEMAELDDEVFLHSGHGNIFSCCTDGALRGLPVTFFLIHIFGGMVLFMTEGIMGVYAGFVYTYAVSPPMSLQSKMAGNLNCIFWAAITAGRLVSIPLSYRFKTVHLLLTNMAGVIVTLLLLMILYTNRVFLFVGTTFLGLFISSVFPCLVAYTEDILEYRGCATTVLVTLSGMGEMTLQVLAGTLIQKKGSYSFLVCGLVIGCLGFIFLLSVILSNHFHRKITGASKKAEITDGPAAPAPEKTAPEHKTAVIQPECIKCDFGLDHNGSKPAENT</sequence>
<keyword id="KW-0472">Membrane</keyword>
<keyword id="KW-1185">Reference proteome</keyword>
<keyword id="KW-0812">Transmembrane</keyword>
<keyword id="KW-1133">Transmembrane helix</keyword>
<reference evidence="3" key="1">
    <citation type="submission" date="2007-11" db="EMBL/GenBank/DDBJ databases">
        <authorList>
            <consortium name="NIH - Zebrafish Gene Collection (ZGC) project"/>
        </authorList>
    </citation>
    <scope>NUCLEOTIDE SEQUENCE [LARGE SCALE MRNA]</scope>
    <source>
        <tissue evidence="3">Kidney</tissue>
    </source>
</reference>
<organism>
    <name type="scientific">Danio rerio</name>
    <name type="common">Zebrafish</name>
    <name type="synonym">Brachydanio rerio</name>
    <dbReference type="NCBI Taxonomy" id="7955"/>
    <lineage>
        <taxon>Eukaryota</taxon>
        <taxon>Metazoa</taxon>
        <taxon>Chordata</taxon>
        <taxon>Craniata</taxon>
        <taxon>Vertebrata</taxon>
        <taxon>Euteleostomi</taxon>
        <taxon>Actinopterygii</taxon>
        <taxon>Neopterygii</taxon>
        <taxon>Teleostei</taxon>
        <taxon>Ostariophysi</taxon>
        <taxon>Cypriniformes</taxon>
        <taxon>Danionidae</taxon>
        <taxon>Danioninae</taxon>
        <taxon>Danio</taxon>
    </lineage>
</organism>
<comment type="subcellular location">
    <subcellularLocation>
        <location evidence="2">Membrane</location>
        <topology evidence="2">Multi-pass membrane protein</topology>
    </subcellularLocation>
</comment>
<comment type="similarity">
    <text evidence="2">Belongs to the major facilitator superfamily.</text>
</comment>
<proteinExistence type="evidence at transcript level"/>
<gene>
    <name evidence="4" type="primary">mfsd4b</name>
    <name type="ORF">zgc:175151</name>
</gene>
<name>MFD4B_DANRE</name>
<feature type="chain" id="PRO_0000401131" description="Major facilitator superfamily domain-containing protein 4B">
    <location>
        <begin position="1"/>
        <end position="536"/>
    </location>
</feature>
<feature type="transmembrane region" description="Helical" evidence="2">
    <location>
        <begin position="19"/>
        <end position="39"/>
    </location>
</feature>
<feature type="transmembrane region" description="Helical" evidence="2">
    <location>
        <begin position="53"/>
        <end position="73"/>
    </location>
</feature>
<feature type="transmembrane region" description="Helical" evidence="2">
    <location>
        <begin position="81"/>
        <end position="101"/>
    </location>
</feature>
<feature type="transmembrane region" description="Helical" evidence="2">
    <location>
        <begin position="105"/>
        <end position="125"/>
    </location>
</feature>
<feature type="transmembrane region" description="Helical" evidence="2">
    <location>
        <begin position="140"/>
        <end position="160"/>
    </location>
</feature>
<feature type="transmembrane region" description="Helical" evidence="2">
    <location>
        <begin position="211"/>
        <end position="231"/>
    </location>
</feature>
<feature type="transmembrane region" description="Helical" evidence="2">
    <location>
        <begin position="297"/>
        <end position="317"/>
    </location>
</feature>
<feature type="transmembrane region" description="Helical" evidence="2">
    <location>
        <begin position="341"/>
        <end position="361"/>
    </location>
</feature>
<feature type="transmembrane region" description="Helical" evidence="2">
    <location>
        <begin position="366"/>
        <end position="386"/>
    </location>
</feature>
<feature type="transmembrane region" description="Helical" evidence="2">
    <location>
        <begin position="391"/>
        <end position="411"/>
    </location>
</feature>
<feature type="transmembrane region" description="Helical" evidence="2">
    <location>
        <begin position="428"/>
        <end position="448"/>
    </location>
</feature>
<feature type="transmembrane region" description="Helical" evidence="2">
    <location>
        <begin position="456"/>
        <end position="476"/>
    </location>
</feature>
<evidence type="ECO:0000250" key="1">
    <source>
        <dbReference type="UniProtKB" id="Q7SXB7"/>
    </source>
</evidence>
<evidence type="ECO:0000255" key="2"/>
<evidence type="ECO:0000312" key="3">
    <source>
        <dbReference type="EMBL" id="AAI55331.1"/>
    </source>
</evidence>
<evidence type="ECO:0000312" key="4">
    <source>
        <dbReference type="ZFIN" id="ZDB-GENE-060810-38"/>
    </source>
</evidence>
<accession>A9JTG4</accession>
<dbReference type="EMBL" id="BC155330">
    <property type="protein sequence ID" value="AAI55331.1"/>
    <property type="molecule type" value="mRNA"/>
</dbReference>
<dbReference type="RefSeq" id="NP_001107888.1">
    <property type="nucleotide sequence ID" value="NM_001114416.1"/>
</dbReference>
<dbReference type="FunCoup" id="A9JTG4">
    <property type="interactions" value="5"/>
</dbReference>
<dbReference type="PaxDb" id="7955-ENSDARP00000025673"/>
<dbReference type="GeneID" id="558146"/>
<dbReference type="KEGG" id="dre:558146"/>
<dbReference type="AGR" id="ZFIN:ZDB-GENE-060810-38"/>
<dbReference type="CTD" id="558146"/>
<dbReference type="ZFIN" id="ZDB-GENE-060810-38">
    <property type="gene designation" value="mfsd4ab"/>
</dbReference>
<dbReference type="eggNOG" id="ENOG502QRVK">
    <property type="taxonomic scope" value="Eukaryota"/>
</dbReference>
<dbReference type="InParanoid" id="A9JTG4"/>
<dbReference type="OrthoDB" id="413079at2759"/>
<dbReference type="PhylomeDB" id="A9JTG4"/>
<dbReference type="PRO" id="PR:A9JTG4"/>
<dbReference type="Proteomes" id="UP000000437">
    <property type="component" value="Chromosome 23"/>
</dbReference>
<dbReference type="GO" id="GO:0016020">
    <property type="term" value="C:membrane"/>
    <property type="evidence" value="ECO:0007669"/>
    <property type="project" value="UniProtKB-SubCell"/>
</dbReference>
<dbReference type="FunFam" id="1.20.1250.20:FF:000200">
    <property type="entry name" value="Major facilitator superfamily domain-containing protein 4A"/>
    <property type="match status" value="1"/>
</dbReference>
<dbReference type="Gene3D" id="1.20.1250.20">
    <property type="entry name" value="MFS general substrate transporter like domains"/>
    <property type="match status" value="2"/>
</dbReference>
<dbReference type="InterPro" id="IPR036259">
    <property type="entry name" value="MFS_trans_sf"/>
</dbReference>
<dbReference type="PANTHER" id="PTHR23121:SF10">
    <property type="entry name" value="MAJOR FACILITATOR SUPERFAMILY DOMAIN-CONTAINING PROTEIN 4A"/>
    <property type="match status" value="1"/>
</dbReference>
<dbReference type="PANTHER" id="PTHR23121">
    <property type="entry name" value="SODIUM-DEPENDENT GLUCOSE TRANSPORTER 1"/>
    <property type="match status" value="1"/>
</dbReference>
<dbReference type="SUPFAM" id="SSF103473">
    <property type="entry name" value="MFS general substrate transporter"/>
    <property type="match status" value="1"/>
</dbReference>